<organism>
    <name type="scientific">Bos taurus</name>
    <name type="common">Bovine</name>
    <dbReference type="NCBI Taxonomy" id="9913"/>
    <lineage>
        <taxon>Eukaryota</taxon>
        <taxon>Metazoa</taxon>
        <taxon>Chordata</taxon>
        <taxon>Craniata</taxon>
        <taxon>Vertebrata</taxon>
        <taxon>Euteleostomi</taxon>
        <taxon>Mammalia</taxon>
        <taxon>Eutheria</taxon>
        <taxon>Laurasiatheria</taxon>
        <taxon>Artiodactyla</taxon>
        <taxon>Ruminantia</taxon>
        <taxon>Pecora</taxon>
        <taxon>Bovidae</taxon>
        <taxon>Bovinae</taxon>
        <taxon>Bos</taxon>
    </lineage>
</organism>
<reference key="1">
    <citation type="submission" date="2006-08" db="EMBL/GenBank/DDBJ databases">
        <authorList>
            <consortium name="NIH - Mammalian Gene Collection (MGC) project"/>
        </authorList>
    </citation>
    <scope>NUCLEOTIDE SEQUENCE [LARGE SCALE MRNA]</scope>
    <source>
        <strain>Hereford</strain>
        <tissue>Brain cortex</tissue>
    </source>
</reference>
<name>ELMD1_BOVIN</name>
<protein>
    <recommendedName>
        <fullName>ELMO domain-containing protein 1</fullName>
    </recommendedName>
</protein>
<accession>Q0IIE6</accession>
<dbReference type="EMBL" id="BC122683">
    <property type="protein sequence ID" value="AAI22684.1"/>
    <property type="molecule type" value="mRNA"/>
</dbReference>
<dbReference type="RefSeq" id="NP_001071576.1">
    <property type="nucleotide sequence ID" value="NM_001078108.1"/>
</dbReference>
<dbReference type="SMR" id="Q0IIE6"/>
<dbReference type="FunCoup" id="Q0IIE6">
    <property type="interactions" value="1085"/>
</dbReference>
<dbReference type="STRING" id="9913.ENSBTAP00000059345"/>
<dbReference type="PaxDb" id="9913-ENSBTAP00000003485"/>
<dbReference type="Ensembl" id="ENSBTAT00000070105.2">
    <property type="protein sequence ID" value="ENSBTAP00000059345.1"/>
    <property type="gene ID" value="ENSBTAG00000002691.7"/>
</dbReference>
<dbReference type="GeneID" id="768233"/>
<dbReference type="KEGG" id="bta:768233"/>
<dbReference type="CTD" id="55531"/>
<dbReference type="VEuPathDB" id="HostDB:ENSBTAG00000002691"/>
<dbReference type="VGNC" id="VGNC:28441">
    <property type="gene designation" value="ELMOD1"/>
</dbReference>
<dbReference type="eggNOG" id="KOG2998">
    <property type="taxonomic scope" value="Eukaryota"/>
</dbReference>
<dbReference type="GeneTree" id="ENSGT00940000159782"/>
<dbReference type="HOGENOM" id="CLU_056289_0_0_1"/>
<dbReference type="InParanoid" id="Q0IIE6"/>
<dbReference type="OMA" id="PHFQQTF"/>
<dbReference type="OrthoDB" id="67155at2759"/>
<dbReference type="TreeFam" id="TF323472"/>
<dbReference type="Proteomes" id="UP000009136">
    <property type="component" value="Chromosome 15"/>
</dbReference>
<dbReference type="Bgee" id="ENSBTAG00000002691">
    <property type="expression patterns" value="Expressed in occipital lobe and 76 other cell types or tissues"/>
</dbReference>
<dbReference type="GO" id="GO:0005096">
    <property type="term" value="F:GTPase activator activity"/>
    <property type="evidence" value="ECO:0000250"/>
    <property type="project" value="UniProtKB"/>
</dbReference>
<dbReference type="InterPro" id="IPR006816">
    <property type="entry name" value="ELMO_dom"/>
</dbReference>
<dbReference type="InterPro" id="IPR050868">
    <property type="entry name" value="ELMO_domain-containing"/>
</dbReference>
<dbReference type="PANTHER" id="PTHR12771:SF18">
    <property type="entry name" value="ELMO DOMAIN-CONTAINING PROTEIN 1"/>
    <property type="match status" value="1"/>
</dbReference>
<dbReference type="PANTHER" id="PTHR12771">
    <property type="entry name" value="ENGULFMENT AND CELL MOTILITY"/>
    <property type="match status" value="1"/>
</dbReference>
<dbReference type="Pfam" id="PF04727">
    <property type="entry name" value="ELMO_CED12"/>
    <property type="match status" value="1"/>
</dbReference>
<dbReference type="PROSITE" id="PS51335">
    <property type="entry name" value="ELMO"/>
    <property type="match status" value="1"/>
</dbReference>
<evidence type="ECO:0000250" key="1"/>
<evidence type="ECO:0000255" key="2">
    <source>
        <dbReference type="PROSITE-ProRule" id="PRU00664"/>
    </source>
</evidence>
<sequence length="326" mass="38036">MKHFLRMLIQVCLFFYCKFLWRCLKFVMRKLTGRCELQRICYNTKPGASRTMKIETSLRDSKSKLLQTSVSVHPDAIEKTIDDIMELKKINPDINPQLGISLQACLLQIVGYRNLIADVEKLRRESYDSDNPQHEEMLLKLWKFLKPNTPLESRISKQWCEIGFQGDDPKTDFRGMGLLGLYNLQYFAERDAAAAQQVLSDSLHPKCSKFSKAEWEKKRMDKAIGYSFAIVGINITDLAYNLLVSGALKTHFYNIAPEAPTLSHFQQTFCYLMHEFHKFWIEEDPMDIMEFNRVREKFRKRIIKQLQNPDMALCPHFAASEGLINM</sequence>
<comment type="function">
    <text evidence="1">Acts as a GTPase-activating protein (GAP) toward guanine nucleotide exchange factors like ARL2, ARL3, ARF1 and ARF6, but not for GTPases outside the Arf family.</text>
</comment>
<feature type="chain" id="PRO_0000333276" description="ELMO domain-containing protein 1">
    <location>
        <begin position="1"/>
        <end position="326"/>
    </location>
</feature>
<feature type="domain" description="ELMO" evidence="2">
    <location>
        <begin position="133"/>
        <end position="306"/>
    </location>
</feature>
<proteinExistence type="evidence at transcript level"/>
<gene>
    <name type="primary">ELMOD1</name>
</gene>
<keyword id="KW-0343">GTPase activation</keyword>
<keyword id="KW-1185">Reference proteome</keyword>